<sequence length="624" mass="70696">MDEQHSLRIAALAGEILTRDRAQVNTIIHSPERALGQKLDAITALVDSMQPGTPRDAAVNEAANVTAQSPMSETQDPQRANDNVSDTVANENAQNLLLEGQDRVLRHRVLQIAVTFLQRNKRVKANATTLAQIEEALRNYETAKNSGASDSVIDGFLERAESLFNTLKNISLSELLDRESAVFADTESAPRTQTADNSPPPVSEQDFDRLDISQLTDYIENNYRDQFDFDKHNSVEDVRNFAKNLWRNKTRVTSTPLQEYQMPPQTPAPLQDQMPPQTPAYATPAQQPSQPTPAQTPAQQPSQPTPAYVTSAQTPAQQPSQPTPVSNYSWERRVASMFANTDLPQNVPLPDSYDTSSVIGQKRRKRRAPPLPPYSSDEEDAAPPRSPKRKESLSSSEEDEFDYEREQKRRREEDKNFLRLKALELSKYAGVNERMEKIVRVTKAMQQTYDYCNCKNTISGTPAAASFINLLRRLNTYNLSHVEMTVNFYELLYPLTLYNDESNRIVGYIFAATNYFQNCAKNFGRMRAEFNEHGPFAQIDSLVMFVIKFNFLCDLQTFFGKIDGLPMLAQPNIKTHTVLVMRDKIVKLAFGALQYDTSLKTDNRRDPKHLQRLIQLMNADFNIM</sequence>
<feature type="chain" id="PRO_0000132936" description="Capsid protein p87">
    <location>
        <begin position="1"/>
        <end position="624"/>
    </location>
</feature>
<feature type="repeat" description="A-1">
    <location>
        <begin position="256"/>
        <end position="268"/>
    </location>
</feature>
<feature type="repeat" description="A-2">
    <location>
        <begin position="269"/>
        <end position="280"/>
    </location>
</feature>
<feature type="repeat" description="B-1">
    <location>
        <begin position="283"/>
        <end position="293"/>
    </location>
</feature>
<feature type="repeat" description="B-2">
    <location>
        <begin position="296"/>
        <end position="306"/>
    </location>
</feature>
<feature type="repeat" description="B-3">
    <location>
        <begin position="314"/>
        <end position="324"/>
    </location>
</feature>
<feature type="region of interest" description="Disordered" evidence="1">
    <location>
        <begin position="183"/>
        <end position="208"/>
    </location>
</feature>
<feature type="region of interest" description="Disordered" evidence="1">
    <location>
        <begin position="254"/>
        <end position="326"/>
    </location>
</feature>
<feature type="region of interest" description="2 X 13 AA tandem repeats, motif A">
    <location>
        <begin position="256"/>
        <end position="280"/>
    </location>
</feature>
<feature type="region of interest" description="3 X 11 AA repeats, motif B">
    <location>
        <begin position="283"/>
        <end position="324"/>
    </location>
</feature>
<feature type="region of interest" description="Disordered" evidence="1">
    <location>
        <begin position="341"/>
        <end position="410"/>
    </location>
</feature>
<feature type="compositionally biased region" description="Low complexity" evidence="1">
    <location>
        <begin position="279"/>
        <end position="324"/>
    </location>
</feature>
<proteinExistence type="predicted"/>
<organism>
    <name type="scientific">Orgyia pseudotsugata multicapsid polyhedrosis virus</name>
    <name type="common">OpMNPV</name>
    <dbReference type="NCBI Taxonomy" id="262177"/>
    <lineage>
        <taxon>Viruses</taxon>
        <taxon>Viruses incertae sedis</taxon>
        <taxon>Naldaviricetes</taxon>
        <taxon>Lefavirales</taxon>
        <taxon>Baculoviridae</taxon>
        <taxon>Alphabaculovirus</taxon>
        <taxon>Alphabaculovirus orpseudotsugatae</taxon>
    </lineage>
</organism>
<keyword id="KW-0167">Capsid protein</keyword>
<keyword id="KW-1185">Reference proteome</keyword>
<keyword id="KW-0677">Repeat</keyword>
<keyword id="KW-0946">Virion</keyword>
<accession>P17930</accession>
<name>VP87_NPVOP</name>
<protein>
    <recommendedName>
        <fullName>Capsid protein p87</fullName>
    </recommendedName>
</protein>
<evidence type="ECO:0000256" key="1">
    <source>
        <dbReference type="SAM" id="MobiDB-lite"/>
    </source>
</evidence>
<reference key="1">
    <citation type="journal article" date="1990" name="Virology">
        <title>A capsid-associated protein of the multicapsid nuclear polyhedrosis virus of Orgyia pseudotsugata: genetic location, sequence, transcriptional mapping, and immunocytochemical characterization.</title>
        <authorList>
            <person name="Mueller R."/>
            <person name="Pearson M.N."/>
            <person name="Russell R.L.Q."/>
            <person name="Rohrmann G.F."/>
        </authorList>
    </citation>
    <scope>NUCLEOTIDE SEQUENCE [GENOMIC DNA]</scope>
</reference>
<reference key="2">
    <citation type="journal article" date="1997" name="Virology">
        <title>The sequence of the Orgyia pseudotsugata multinucleocapsid nuclear polyhedrosis virus genome.</title>
        <authorList>
            <person name="Ahrens C.H."/>
            <person name="Russell R.R."/>
            <person name="Funk C.J."/>
            <person name="Evans J."/>
            <person name="Harwood S."/>
            <person name="Rohrmann G.F."/>
        </authorList>
    </citation>
    <scope>NUCLEOTIDE SEQUENCE [LARGE SCALE GENOMIC DNA]</scope>
</reference>
<organismHost>
    <name type="scientific">Orgyia pseudotsugata</name>
    <name type="common">Douglas-fir tussock moth</name>
    <dbReference type="NCBI Taxonomy" id="33414"/>
</organismHost>
<comment type="subcellular location">
    <subcellularLocation>
        <location>Virion</location>
    </subcellularLocation>
    <text>Capsid-associated.</text>
</comment>
<gene>
    <name type="primary">P87</name>
    <name type="ORF">ORF105</name>
</gene>
<dbReference type="EMBL" id="D13959">
    <property type="protein sequence ID" value="BAA03061.1"/>
    <property type="molecule type" value="Genomic_DNA"/>
</dbReference>
<dbReference type="EMBL" id="U75930">
    <property type="protein sequence ID" value="AAC59104.1"/>
    <property type="molecule type" value="Genomic_DNA"/>
</dbReference>
<dbReference type="PIR" id="A34602">
    <property type="entry name" value="VCNV87"/>
</dbReference>
<dbReference type="RefSeq" id="NP_046261.1">
    <property type="nucleotide sequence ID" value="NC_001875.2"/>
</dbReference>
<dbReference type="SMR" id="P17930"/>
<dbReference type="KEGG" id="vg:912023"/>
<dbReference type="OrthoDB" id="1682at10239"/>
<dbReference type="Proteomes" id="UP000009248">
    <property type="component" value="Genome"/>
</dbReference>
<dbReference type="GO" id="GO:0019028">
    <property type="term" value="C:viral capsid"/>
    <property type="evidence" value="ECO:0007669"/>
    <property type="project" value="UniProtKB-KW"/>
</dbReference>
<dbReference type="InterPro" id="IPR009893">
    <property type="entry name" value="Nucleo_P80/P87"/>
</dbReference>
<dbReference type="Pfam" id="PF07267">
    <property type="entry name" value="Nucleo_P87"/>
    <property type="match status" value="2"/>
</dbReference>
<dbReference type="PIRSF" id="PIRSF003639">
    <property type="entry name" value="Nucleo_P87"/>
    <property type="match status" value="1"/>
</dbReference>